<evidence type="ECO:0000250" key="1">
    <source>
        <dbReference type="UniProtKB" id="P20485"/>
    </source>
</evidence>
<evidence type="ECO:0000269" key="2">
    <source>
    </source>
</evidence>
<evidence type="ECO:0000305" key="3"/>
<comment type="function">
    <text evidence="1">Catalyzes the committed step in the synthesis of phosphatidylcholine by the CDP-choline pathway.</text>
</comment>
<comment type="catalytic activity">
    <reaction evidence="1">
        <text>choline + ATP = phosphocholine + ADP + H(+)</text>
        <dbReference type="Rhea" id="RHEA:12837"/>
        <dbReference type="ChEBI" id="CHEBI:15354"/>
        <dbReference type="ChEBI" id="CHEBI:15378"/>
        <dbReference type="ChEBI" id="CHEBI:30616"/>
        <dbReference type="ChEBI" id="CHEBI:295975"/>
        <dbReference type="ChEBI" id="CHEBI:456216"/>
        <dbReference type="EC" id="2.7.1.32"/>
    </reaction>
    <physiologicalReaction direction="left-to-right" evidence="1">
        <dbReference type="Rhea" id="RHEA:12838"/>
    </physiologicalReaction>
</comment>
<comment type="cofactor">
    <cofactor evidence="1">
        <name>Mg(2+)</name>
        <dbReference type="ChEBI" id="CHEBI:18420"/>
    </cofactor>
</comment>
<comment type="pathway">
    <text evidence="1">Phospholipid metabolism; phosphatidylcholine biosynthesis; phosphocholine from choline: step 1/1.</text>
</comment>
<comment type="subunit">
    <text evidence="1">Monomer.</text>
</comment>
<comment type="subcellular location">
    <subcellularLocation>
        <location evidence="2">Cytoplasm</location>
    </subcellularLocation>
    <subcellularLocation>
        <location evidence="2">Nucleus</location>
    </subcellularLocation>
</comment>
<comment type="similarity">
    <text evidence="3">Belongs to the choline/ethanolamine kinase family.</text>
</comment>
<proteinExistence type="inferred from homology"/>
<accession>Q10276</accession>
<dbReference type="EC" id="2.7.1.32" evidence="1"/>
<dbReference type="EMBL" id="CU329670">
    <property type="protein sequence ID" value="CAA93600.1"/>
    <property type="molecule type" value="Genomic_DNA"/>
</dbReference>
<dbReference type="PIR" id="S67441">
    <property type="entry name" value="S67441"/>
</dbReference>
<dbReference type="SMR" id="Q10276"/>
<dbReference type="BioGRID" id="279285">
    <property type="interactions" value="33"/>
</dbReference>
<dbReference type="FunCoup" id="Q10276">
    <property type="interactions" value="482"/>
</dbReference>
<dbReference type="STRING" id="284812.Q10276"/>
<dbReference type="iPTMnet" id="Q10276"/>
<dbReference type="PaxDb" id="4896-SPAC13G7.12c.1"/>
<dbReference type="EnsemblFungi" id="SPAC13G7.12c.1">
    <property type="protein sequence ID" value="SPAC13G7.12c.1:pep"/>
    <property type="gene ID" value="SPAC13G7.12c"/>
</dbReference>
<dbReference type="KEGG" id="spo:2542839"/>
<dbReference type="PomBase" id="SPAC13G7.12c"/>
<dbReference type="VEuPathDB" id="FungiDB:SPAC13G7.12c"/>
<dbReference type="eggNOG" id="KOG2686">
    <property type="taxonomic scope" value="Eukaryota"/>
</dbReference>
<dbReference type="HOGENOM" id="CLU_012712_5_1_1"/>
<dbReference type="InParanoid" id="Q10276"/>
<dbReference type="OMA" id="IETSIDY"/>
<dbReference type="PhylomeDB" id="Q10276"/>
<dbReference type="Reactome" id="R-SPO-1483191">
    <property type="pathway name" value="Synthesis of PC"/>
</dbReference>
<dbReference type="Reactome" id="R-SPO-1483213">
    <property type="pathway name" value="Synthesis of PE"/>
</dbReference>
<dbReference type="UniPathway" id="UPA00753">
    <property type="reaction ID" value="UER00737"/>
</dbReference>
<dbReference type="PRO" id="PR:Q10276"/>
<dbReference type="Proteomes" id="UP000002485">
    <property type="component" value="Chromosome I"/>
</dbReference>
<dbReference type="GO" id="GO:0005737">
    <property type="term" value="C:cytoplasm"/>
    <property type="evidence" value="ECO:0000318"/>
    <property type="project" value="GO_Central"/>
</dbReference>
<dbReference type="GO" id="GO:0005829">
    <property type="term" value="C:cytosol"/>
    <property type="evidence" value="ECO:0007005"/>
    <property type="project" value="PomBase"/>
</dbReference>
<dbReference type="GO" id="GO:0005634">
    <property type="term" value="C:nucleus"/>
    <property type="evidence" value="ECO:0007005"/>
    <property type="project" value="PomBase"/>
</dbReference>
<dbReference type="GO" id="GO:0005524">
    <property type="term" value="F:ATP binding"/>
    <property type="evidence" value="ECO:0007669"/>
    <property type="project" value="UniProtKB-KW"/>
</dbReference>
<dbReference type="GO" id="GO:0004103">
    <property type="term" value="F:choline kinase activity"/>
    <property type="evidence" value="ECO:0000318"/>
    <property type="project" value="GO_Central"/>
</dbReference>
<dbReference type="GO" id="GO:0004305">
    <property type="term" value="F:ethanolamine kinase activity"/>
    <property type="evidence" value="ECO:0000318"/>
    <property type="project" value="GO_Central"/>
</dbReference>
<dbReference type="GO" id="GO:0006657">
    <property type="term" value="P:CDP-choline pathway"/>
    <property type="evidence" value="ECO:0000303"/>
    <property type="project" value="PomBase"/>
</dbReference>
<dbReference type="GO" id="GO:0006656">
    <property type="term" value="P:phosphatidylcholine biosynthetic process"/>
    <property type="evidence" value="ECO:0000318"/>
    <property type="project" value="GO_Central"/>
</dbReference>
<dbReference type="GO" id="GO:0006646">
    <property type="term" value="P:phosphatidylethanolamine biosynthetic process"/>
    <property type="evidence" value="ECO:0000318"/>
    <property type="project" value="GO_Central"/>
</dbReference>
<dbReference type="CDD" id="cd05157">
    <property type="entry name" value="ETNK_euk"/>
    <property type="match status" value="1"/>
</dbReference>
<dbReference type="Gene3D" id="3.90.1200.10">
    <property type="match status" value="1"/>
</dbReference>
<dbReference type="Gene3D" id="3.30.200.20">
    <property type="entry name" value="Phosphorylase Kinase, domain 1"/>
    <property type="match status" value="1"/>
</dbReference>
<dbReference type="InterPro" id="IPR007521">
    <property type="entry name" value="Choline_kin_N"/>
</dbReference>
<dbReference type="InterPro" id="IPR011009">
    <property type="entry name" value="Kinase-like_dom_sf"/>
</dbReference>
<dbReference type="PANTHER" id="PTHR22603">
    <property type="entry name" value="CHOLINE/ETHANOALAMINE KINASE"/>
    <property type="match status" value="1"/>
</dbReference>
<dbReference type="PANTHER" id="PTHR22603:SF93">
    <property type="entry name" value="RE24176P"/>
    <property type="match status" value="1"/>
</dbReference>
<dbReference type="Pfam" id="PF04428">
    <property type="entry name" value="Choline_kin_N"/>
    <property type="match status" value="1"/>
</dbReference>
<dbReference type="Pfam" id="PF01633">
    <property type="entry name" value="Choline_kinase"/>
    <property type="match status" value="1"/>
</dbReference>
<dbReference type="SUPFAM" id="SSF56112">
    <property type="entry name" value="Protein kinase-like (PK-like)"/>
    <property type="match status" value="1"/>
</dbReference>
<gene>
    <name type="ORF">SPAC13G7.12c</name>
</gene>
<feature type="chain" id="PRO_0000206225" description="Choline kinase">
    <location>
        <begin position="1"/>
        <end position="456"/>
    </location>
</feature>
<reference key="1">
    <citation type="journal article" date="2002" name="Nature">
        <title>The genome sequence of Schizosaccharomyces pombe.</title>
        <authorList>
            <person name="Wood V."/>
            <person name="Gwilliam R."/>
            <person name="Rajandream M.A."/>
            <person name="Lyne M.H."/>
            <person name="Lyne R."/>
            <person name="Stewart A."/>
            <person name="Sgouros J.G."/>
            <person name="Peat N."/>
            <person name="Hayles J."/>
            <person name="Baker S.G."/>
            <person name="Basham D."/>
            <person name="Bowman S."/>
            <person name="Brooks K."/>
            <person name="Brown D."/>
            <person name="Brown S."/>
            <person name="Chillingworth T."/>
            <person name="Churcher C.M."/>
            <person name="Collins M."/>
            <person name="Connor R."/>
            <person name="Cronin A."/>
            <person name="Davis P."/>
            <person name="Feltwell T."/>
            <person name="Fraser A."/>
            <person name="Gentles S."/>
            <person name="Goble A."/>
            <person name="Hamlin N."/>
            <person name="Harris D.E."/>
            <person name="Hidalgo J."/>
            <person name="Hodgson G."/>
            <person name="Holroyd S."/>
            <person name="Hornsby T."/>
            <person name="Howarth S."/>
            <person name="Huckle E.J."/>
            <person name="Hunt S."/>
            <person name="Jagels K."/>
            <person name="James K.D."/>
            <person name="Jones L."/>
            <person name="Jones M."/>
            <person name="Leather S."/>
            <person name="McDonald S."/>
            <person name="McLean J."/>
            <person name="Mooney P."/>
            <person name="Moule S."/>
            <person name="Mungall K.L."/>
            <person name="Murphy L.D."/>
            <person name="Niblett D."/>
            <person name="Odell C."/>
            <person name="Oliver K."/>
            <person name="O'Neil S."/>
            <person name="Pearson D."/>
            <person name="Quail M.A."/>
            <person name="Rabbinowitsch E."/>
            <person name="Rutherford K.M."/>
            <person name="Rutter S."/>
            <person name="Saunders D."/>
            <person name="Seeger K."/>
            <person name="Sharp S."/>
            <person name="Skelton J."/>
            <person name="Simmonds M.N."/>
            <person name="Squares R."/>
            <person name="Squares S."/>
            <person name="Stevens K."/>
            <person name="Taylor K."/>
            <person name="Taylor R.G."/>
            <person name="Tivey A."/>
            <person name="Walsh S.V."/>
            <person name="Warren T."/>
            <person name="Whitehead S."/>
            <person name="Woodward J.R."/>
            <person name="Volckaert G."/>
            <person name="Aert R."/>
            <person name="Robben J."/>
            <person name="Grymonprez B."/>
            <person name="Weltjens I."/>
            <person name="Vanstreels E."/>
            <person name="Rieger M."/>
            <person name="Schaefer M."/>
            <person name="Mueller-Auer S."/>
            <person name="Gabel C."/>
            <person name="Fuchs M."/>
            <person name="Duesterhoeft A."/>
            <person name="Fritzc C."/>
            <person name="Holzer E."/>
            <person name="Moestl D."/>
            <person name="Hilbert H."/>
            <person name="Borzym K."/>
            <person name="Langer I."/>
            <person name="Beck A."/>
            <person name="Lehrach H."/>
            <person name="Reinhardt R."/>
            <person name="Pohl T.M."/>
            <person name="Eger P."/>
            <person name="Zimmermann W."/>
            <person name="Wedler H."/>
            <person name="Wambutt R."/>
            <person name="Purnelle B."/>
            <person name="Goffeau A."/>
            <person name="Cadieu E."/>
            <person name="Dreano S."/>
            <person name="Gloux S."/>
            <person name="Lelaure V."/>
            <person name="Mottier S."/>
            <person name="Galibert F."/>
            <person name="Aves S.J."/>
            <person name="Xiang Z."/>
            <person name="Hunt C."/>
            <person name="Moore K."/>
            <person name="Hurst S.M."/>
            <person name="Lucas M."/>
            <person name="Rochet M."/>
            <person name="Gaillardin C."/>
            <person name="Tallada V.A."/>
            <person name="Garzon A."/>
            <person name="Thode G."/>
            <person name="Daga R.R."/>
            <person name="Cruzado L."/>
            <person name="Jimenez J."/>
            <person name="Sanchez M."/>
            <person name="del Rey F."/>
            <person name="Benito J."/>
            <person name="Dominguez A."/>
            <person name="Revuelta J.L."/>
            <person name="Moreno S."/>
            <person name="Armstrong J."/>
            <person name="Forsburg S.L."/>
            <person name="Cerutti L."/>
            <person name="Lowe T."/>
            <person name="McCombie W.R."/>
            <person name="Paulsen I."/>
            <person name="Potashkin J."/>
            <person name="Shpakovski G.V."/>
            <person name="Ussery D."/>
            <person name="Barrell B.G."/>
            <person name="Nurse P."/>
        </authorList>
    </citation>
    <scope>NUCLEOTIDE SEQUENCE [LARGE SCALE GENOMIC DNA]</scope>
    <source>
        <strain>972 / ATCC 24843</strain>
    </source>
</reference>
<reference key="2">
    <citation type="journal article" date="2006" name="Nat. Biotechnol.">
        <title>ORFeome cloning and global analysis of protein localization in the fission yeast Schizosaccharomyces pombe.</title>
        <authorList>
            <person name="Matsuyama A."/>
            <person name="Arai R."/>
            <person name="Yashiroda Y."/>
            <person name="Shirai A."/>
            <person name="Kamata A."/>
            <person name="Sekido S."/>
            <person name="Kobayashi Y."/>
            <person name="Hashimoto A."/>
            <person name="Hamamoto M."/>
            <person name="Hiraoka Y."/>
            <person name="Horinouchi S."/>
            <person name="Yoshida M."/>
        </authorList>
    </citation>
    <scope>SUBCELLULAR LOCATION [LARGE SCALE ANALYSIS]</scope>
</reference>
<protein>
    <recommendedName>
        <fullName>Choline kinase</fullName>
        <ecNumber evidence="1">2.7.1.32</ecNumber>
    </recommendedName>
    <alternativeName>
        <fullName>ATP:choline phosphotransferase</fullName>
    </alternativeName>
</protein>
<organism>
    <name type="scientific">Schizosaccharomyces pombe (strain 972 / ATCC 24843)</name>
    <name type="common">Fission yeast</name>
    <dbReference type="NCBI Taxonomy" id="284812"/>
    <lineage>
        <taxon>Eukaryota</taxon>
        <taxon>Fungi</taxon>
        <taxon>Dikarya</taxon>
        <taxon>Ascomycota</taxon>
        <taxon>Taphrinomycotina</taxon>
        <taxon>Schizosaccharomycetes</taxon>
        <taxon>Schizosaccharomycetales</taxon>
        <taxon>Schizosaccharomycetaceae</taxon>
        <taxon>Schizosaccharomyces</taxon>
    </lineage>
</organism>
<keyword id="KW-0067">ATP-binding</keyword>
<keyword id="KW-0963">Cytoplasm</keyword>
<keyword id="KW-0418">Kinase</keyword>
<keyword id="KW-0444">Lipid biosynthesis</keyword>
<keyword id="KW-0443">Lipid metabolism</keyword>
<keyword id="KW-0547">Nucleotide-binding</keyword>
<keyword id="KW-0539">Nucleus</keyword>
<keyword id="KW-0594">Phospholipid biosynthesis</keyword>
<keyword id="KW-1208">Phospholipid metabolism</keyword>
<keyword id="KW-1185">Reference proteome</keyword>
<keyword id="KW-0808">Transferase</keyword>
<name>KICH_SCHPO</name>
<sequence length="456" mass="52536">MVNFASEVDKNNAFDSAHPSRKCKGSLDCNDPDPIFRHKVLVIIHKLAISSWNRIPLTLCNKLHIKRISGALTNAVYYVAPPEGYHAPKLLLRIYGPHVELFINRQVELENLKRLARHNIGPYLIGEFSNGRFEQYMESTTLTCKTIRDPKLSIYVGRRLCELHNFILLHPHEVLEMPAAWKNCLVWLPKAKAKILGRKHSLAITSEFMKTLEEDFNAYYNWFVEWSRDKKDWFGLKMVFSHNDTQYGNLLKIKAKKRSIPLSQKHRTLVPVDFEYAGPNLCAFDLANYFAEWMADYHHPTHNYLMDRSRYPDFNARKLVYHAYVEQSAVINDLLEIEDASLLKTDISDELKNTFEKQIMNLEESVRAISPAANIGWALWGILQCLEEDDEWEDLSVSSQVADRPEKQLVEGSTVPPIGTSSFDYIGYSSEKFDLFYEGCAALGLNGRNRSTFSYA</sequence>